<reference key="1">
    <citation type="journal article" date="2002" name="Genome">
        <title>Phylogenetic analysis of North American Elymus and the monogenomic Triticeae (Poaceae) using three chloroplast DNA data sets.</title>
        <authorList>
            <person name="Mason-Gamer R.J."/>
            <person name="Orme N.L."/>
            <person name="Anderson C.M."/>
        </authorList>
    </citation>
    <scope>NUCLEOTIDE SEQUENCE [GENOMIC DNA]</scope>
</reference>
<comment type="function">
    <text evidence="1">DNA-dependent RNA polymerase catalyzes the transcription of DNA into RNA using the four ribonucleoside triphosphates as substrates.</text>
</comment>
<comment type="catalytic activity">
    <reaction evidence="1">
        <text>RNA(n) + a ribonucleoside 5'-triphosphate = RNA(n+1) + diphosphate</text>
        <dbReference type="Rhea" id="RHEA:21248"/>
        <dbReference type="Rhea" id="RHEA-COMP:14527"/>
        <dbReference type="Rhea" id="RHEA-COMP:17342"/>
        <dbReference type="ChEBI" id="CHEBI:33019"/>
        <dbReference type="ChEBI" id="CHEBI:61557"/>
        <dbReference type="ChEBI" id="CHEBI:140395"/>
        <dbReference type="EC" id="2.7.7.6"/>
    </reaction>
</comment>
<comment type="subunit">
    <text evidence="1">In plastids the minimal PEP RNA polymerase catalytic core is composed of four subunits: alpha, beta, beta', and beta''. When a (nuclear-encoded) sigma factor is associated with the core the holoenzyme is formed, which can initiate transcription.</text>
</comment>
<comment type="subcellular location">
    <subcellularLocation>
        <location>Plastid</location>
        <location>Chloroplast</location>
    </subcellularLocation>
</comment>
<comment type="domain">
    <text evidence="1">The N-terminal domain is essential for RNAP assembly and basal transcription, whereas the C-terminal domain is involved in interaction with transcriptional regulators and with upstream promoter elements.</text>
</comment>
<comment type="similarity">
    <text evidence="1">Belongs to the RNA polymerase alpha chain family.</text>
</comment>
<dbReference type="EC" id="2.7.7.6" evidence="1"/>
<dbReference type="EMBL" id="AY115920">
    <property type="protein sequence ID" value="AAM97429.1"/>
    <property type="molecule type" value="Genomic_DNA"/>
</dbReference>
<dbReference type="SMR" id="Q7H6J1"/>
<dbReference type="GO" id="GO:0009507">
    <property type="term" value="C:chloroplast"/>
    <property type="evidence" value="ECO:0007669"/>
    <property type="project" value="UniProtKB-SubCell"/>
</dbReference>
<dbReference type="GO" id="GO:0000428">
    <property type="term" value="C:DNA-directed RNA polymerase complex"/>
    <property type="evidence" value="ECO:0007669"/>
    <property type="project" value="UniProtKB-KW"/>
</dbReference>
<dbReference type="GO" id="GO:0005739">
    <property type="term" value="C:mitochondrion"/>
    <property type="evidence" value="ECO:0007669"/>
    <property type="project" value="GOC"/>
</dbReference>
<dbReference type="GO" id="GO:0003677">
    <property type="term" value="F:DNA binding"/>
    <property type="evidence" value="ECO:0007669"/>
    <property type="project" value="UniProtKB-UniRule"/>
</dbReference>
<dbReference type="GO" id="GO:0003899">
    <property type="term" value="F:DNA-directed RNA polymerase activity"/>
    <property type="evidence" value="ECO:0007669"/>
    <property type="project" value="UniProtKB-UniRule"/>
</dbReference>
<dbReference type="GO" id="GO:0046983">
    <property type="term" value="F:protein dimerization activity"/>
    <property type="evidence" value="ECO:0007669"/>
    <property type="project" value="InterPro"/>
</dbReference>
<dbReference type="GO" id="GO:0006351">
    <property type="term" value="P:DNA-templated transcription"/>
    <property type="evidence" value="ECO:0007669"/>
    <property type="project" value="UniProtKB-UniRule"/>
</dbReference>
<dbReference type="CDD" id="cd06928">
    <property type="entry name" value="RNAP_alpha_NTD"/>
    <property type="match status" value="1"/>
</dbReference>
<dbReference type="FunFam" id="1.10.150.20:FF:000021">
    <property type="entry name" value="DNA-directed RNA polymerase subunit alpha"/>
    <property type="match status" value="1"/>
</dbReference>
<dbReference type="FunFam" id="2.170.120.12:FF:000001">
    <property type="entry name" value="DNA-directed RNA polymerase subunit alpha"/>
    <property type="match status" value="1"/>
</dbReference>
<dbReference type="Gene3D" id="1.10.150.20">
    <property type="entry name" value="5' to 3' exonuclease, C-terminal subdomain"/>
    <property type="match status" value="1"/>
</dbReference>
<dbReference type="Gene3D" id="2.170.120.12">
    <property type="entry name" value="DNA-directed RNA polymerase, insert domain"/>
    <property type="match status" value="1"/>
</dbReference>
<dbReference type="Gene3D" id="3.30.1360.10">
    <property type="entry name" value="RNA polymerase, RBP11-like subunit"/>
    <property type="match status" value="1"/>
</dbReference>
<dbReference type="HAMAP" id="MF_00059">
    <property type="entry name" value="RNApol_bact_RpoA"/>
    <property type="match status" value="1"/>
</dbReference>
<dbReference type="InterPro" id="IPR011262">
    <property type="entry name" value="DNA-dir_RNA_pol_insert"/>
</dbReference>
<dbReference type="InterPro" id="IPR011263">
    <property type="entry name" value="DNA-dir_RNA_pol_RpoA/D/Rpb3"/>
</dbReference>
<dbReference type="InterPro" id="IPR011773">
    <property type="entry name" value="DNA-dir_RpoA"/>
</dbReference>
<dbReference type="InterPro" id="IPR036603">
    <property type="entry name" value="RBP11-like"/>
</dbReference>
<dbReference type="InterPro" id="IPR011260">
    <property type="entry name" value="RNAP_asu_C"/>
</dbReference>
<dbReference type="InterPro" id="IPR036643">
    <property type="entry name" value="RNApol_insert_sf"/>
</dbReference>
<dbReference type="NCBIfam" id="TIGR02027">
    <property type="entry name" value="rpoA"/>
    <property type="match status" value="1"/>
</dbReference>
<dbReference type="Pfam" id="PF01000">
    <property type="entry name" value="RNA_pol_A_bac"/>
    <property type="match status" value="1"/>
</dbReference>
<dbReference type="Pfam" id="PF03118">
    <property type="entry name" value="RNA_pol_A_CTD"/>
    <property type="match status" value="1"/>
</dbReference>
<dbReference type="Pfam" id="PF01193">
    <property type="entry name" value="RNA_pol_L"/>
    <property type="match status" value="1"/>
</dbReference>
<dbReference type="SMART" id="SM00662">
    <property type="entry name" value="RPOLD"/>
    <property type="match status" value="1"/>
</dbReference>
<dbReference type="SUPFAM" id="SSF47789">
    <property type="entry name" value="C-terminal domain of RNA polymerase alpha subunit"/>
    <property type="match status" value="1"/>
</dbReference>
<dbReference type="SUPFAM" id="SSF56553">
    <property type="entry name" value="Insert subdomain of RNA polymerase alpha subunit"/>
    <property type="match status" value="1"/>
</dbReference>
<dbReference type="SUPFAM" id="SSF55257">
    <property type="entry name" value="RBP11-like subunits of RNA polymerase"/>
    <property type="match status" value="1"/>
</dbReference>
<name>RPOA_HORJU</name>
<protein>
    <recommendedName>
        <fullName evidence="1">DNA-directed RNA polymerase subunit alpha</fullName>
        <shortName evidence="1">PEP</shortName>
        <ecNumber evidence="1">2.7.7.6</ecNumber>
    </recommendedName>
    <alternativeName>
        <fullName evidence="1">Plastid-encoded RNA polymerase subunit alpha</fullName>
        <shortName evidence="1">RNA polymerase subunit alpha</shortName>
    </alternativeName>
</protein>
<geneLocation type="chloroplast"/>
<feature type="chain" id="PRO_0000175462" description="DNA-directed RNA polymerase subunit alpha">
    <location>
        <begin position="1"/>
        <end position="339"/>
    </location>
</feature>
<feature type="region of interest" description="Alpha N-terminal domain (alpha-NTD)" evidence="1">
    <location>
        <begin position="1"/>
        <end position="233"/>
    </location>
</feature>
<feature type="region of interest" description="Alpha C-terminal domain (alpha-CTD)" evidence="1">
    <location>
        <begin position="266"/>
        <end position="339"/>
    </location>
</feature>
<sequence length="339" mass="38905">MVREEVAGSTQTLQWKCVESRVDSKRLYYGRFILSPLRKGQADTVGIALRRALLGEIEGTCITRAKFGSVPHEYSTIAGIEESVQEILLNLKEIVLRSNLYGVRDASICVKGPRYITAQDIILPPSVETVDTAQPIANLTEPIDFCIDLQIKRDRGYQTELRKNYQDGSYPIDAVSMPVRNVNYSIFSCGNGNEKHEILFLEIWTNGSLTPKEALYEASRNLIDLFLPFLHAEEEGTSFEENKNRFTPPLFTFQKRLTNLKKNKKGIPLNCIFIDQLELTSRTYNCLKRANIHTLLDLLSKTEEDLMRIDSFRMEDRKHIWDTLEKHLPIDLLKNKLSF</sequence>
<accession>Q7H6J1</accession>
<evidence type="ECO:0000255" key="1">
    <source>
        <dbReference type="HAMAP-Rule" id="MF_00059"/>
    </source>
</evidence>
<proteinExistence type="inferred from homology"/>
<organism>
    <name type="scientific">Hordeum jubatum</name>
    <name type="common">Foxtail barley</name>
    <name type="synonym">Critesion jubatum</name>
    <dbReference type="NCBI Taxonomy" id="4517"/>
    <lineage>
        <taxon>Eukaryota</taxon>
        <taxon>Viridiplantae</taxon>
        <taxon>Streptophyta</taxon>
        <taxon>Embryophyta</taxon>
        <taxon>Tracheophyta</taxon>
        <taxon>Spermatophyta</taxon>
        <taxon>Magnoliopsida</taxon>
        <taxon>Liliopsida</taxon>
        <taxon>Poales</taxon>
        <taxon>Poaceae</taxon>
        <taxon>BOP clade</taxon>
        <taxon>Pooideae</taxon>
        <taxon>Triticodae</taxon>
        <taxon>Triticeae</taxon>
        <taxon>Hordeinae</taxon>
        <taxon>Hordeum</taxon>
    </lineage>
</organism>
<keyword id="KW-0150">Chloroplast</keyword>
<keyword id="KW-0240">DNA-directed RNA polymerase</keyword>
<keyword id="KW-0548">Nucleotidyltransferase</keyword>
<keyword id="KW-0934">Plastid</keyword>
<keyword id="KW-0804">Transcription</keyword>
<keyword id="KW-0808">Transferase</keyword>
<gene>
    <name evidence="1" type="primary">rpoA</name>
</gene>